<protein>
    <recommendedName>
        <fullName evidence="1">5'-nucleotidase SurE</fullName>
        <ecNumber evidence="1">3.1.3.5</ecNumber>
    </recommendedName>
    <alternativeName>
        <fullName evidence="1">Nucleoside 5'-monophosphate phosphohydrolase</fullName>
    </alternativeName>
</protein>
<evidence type="ECO:0000255" key="1">
    <source>
        <dbReference type="HAMAP-Rule" id="MF_00060"/>
    </source>
</evidence>
<name>SURE_ACIBY</name>
<reference key="1">
    <citation type="journal article" date="2008" name="PLoS ONE">
        <title>Comparative analysis of Acinetobacters: three genomes for three lifestyles.</title>
        <authorList>
            <person name="Vallenet D."/>
            <person name="Nordmann P."/>
            <person name="Barbe V."/>
            <person name="Poirel L."/>
            <person name="Mangenot S."/>
            <person name="Bataille E."/>
            <person name="Dossat C."/>
            <person name="Gas S."/>
            <person name="Kreimeyer A."/>
            <person name="Lenoble P."/>
            <person name="Oztas S."/>
            <person name="Poulain J."/>
            <person name="Segurens B."/>
            <person name="Robert C."/>
            <person name="Abergel C."/>
            <person name="Claverie J.-M."/>
            <person name="Raoult D."/>
            <person name="Medigue C."/>
            <person name="Weissenbach J."/>
            <person name="Cruveiller S."/>
        </authorList>
    </citation>
    <scope>NUCLEOTIDE SEQUENCE [LARGE SCALE GENOMIC DNA]</scope>
    <source>
        <strain>AYE</strain>
    </source>
</reference>
<keyword id="KW-0963">Cytoplasm</keyword>
<keyword id="KW-0378">Hydrolase</keyword>
<keyword id="KW-0479">Metal-binding</keyword>
<keyword id="KW-0547">Nucleotide-binding</keyword>
<sequence>MNILIANDDGVFAPGIQALADALKPLGRVVVVAPESERSGFSSALTLDRPLRPIQIAEDVWAVNGTPADCVYLSMNGLFDFEFDLVVSGINSGANLGDDVLYSGTVGAAFEGRLMKQPAIAVSLAGPDVRSYDHKDDYAQAAKWVHDFIAKGLPALPPRHIFNINIPDVPQLKGTQITYQGRRAQSKPITSHVDPRGRQVYWIGLAGEAVTDPQRIASQIQSDFFAVANGFVSVTPIQMDATNYAVLEDLQASLG</sequence>
<organism>
    <name type="scientific">Acinetobacter baumannii (strain AYE)</name>
    <dbReference type="NCBI Taxonomy" id="509173"/>
    <lineage>
        <taxon>Bacteria</taxon>
        <taxon>Pseudomonadati</taxon>
        <taxon>Pseudomonadota</taxon>
        <taxon>Gammaproteobacteria</taxon>
        <taxon>Moraxellales</taxon>
        <taxon>Moraxellaceae</taxon>
        <taxon>Acinetobacter</taxon>
        <taxon>Acinetobacter calcoaceticus/baumannii complex</taxon>
    </lineage>
</organism>
<feature type="chain" id="PRO_1000091981" description="5'-nucleotidase SurE">
    <location>
        <begin position="1"/>
        <end position="255"/>
    </location>
</feature>
<feature type="binding site" evidence="1">
    <location>
        <position position="8"/>
    </location>
    <ligand>
        <name>a divalent metal cation</name>
        <dbReference type="ChEBI" id="CHEBI:60240"/>
    </ligand>
</feature>
<feature type="binding site" evidence="1">
    <location>
        <position position="9"/>
    </location>
    <ligand>
        <name>a divalent metal cation</name>
        <dbReference type="ChEBI" id="CHEBI:60240"/>
    </ligand>
</feature>
<feature type="binding site" evidence="1">
    <location>
        <position position="39"/>
    </location>
    <ligand>
        <name>a divalent metal cation</name>
        <dbReference type="ChEBI" id="CHEBI:60240"/>
    </ligand>
</feature>
<feature type="binding site" evidence="1">
    <location>
        <position position="91"/>
    </location>
    <ligand>
        <name>a divalent metal cation</name>
        <dbReference type="ChEBI" id="CHEBI:60240"/>
    </ligand>
</feature>
<dbReference type="EC" id="3.1.3.5" evidence="1"/>
<dbReference type="EMBL" id="CU459141">
    <property type="protein sequence ID" value="CAM85980.1"/>
    <property type="molecule type" value="Genomic_DNA"/>
</dbReference>
<dbReference type="RefSeq" id="WP_001023216.1">
    <property type="nucleotide sequence ID" value="NZ_JBDGFB010000018.1"/>
</dbReference>
<dbReference type="SMR" id="B0VBZ1"/>
<dbReference type="EnsemblBacteria" id="CAM85980">
    <property type="protein sequence ID" value="CAM85980"/>
    <property type="gene ID" value="ABAYE1047"/>
</dbReference>
<dbReference type="GeneID" id="92894738"/>
<dbReference type="KEGG" id="aby:ABAYE1047"/>
<dbReference type="HOGENOM" id="CLU_045192_1_2_6"/>
<dbReference type="GO" id="GO:0005737">
    <property type="term" value="C:cytoplasm"/>
    <property type="evidence" value="ECO:0007669"/>
    <property type="project" value="UniProtKB-SubCell"/>
</dbReference>
<dbReference type="GO" id="GO:0008254">
    <property type="term" value="F:3'-nucleotidase activity"/>
    <property type="evidence" value="ECO:0007669"/>
    <property type="project" value="TreeGrafter"/>
</dbReference>
<dbReference type="GO" id="GO:0008253">
    <property type="term" value="F:5'-nucleotidase activity"/>
    <property type="evidence" value="ECO:0007669"/>
    <property type="project" value="UniProtKB-UniRule"/>
</dbReference>
<dbReference type="GO" id="GO:0004309">
    <property type="term" value="F:exopolyphosphatase activity"/>
    <property type="evidence" value="ECO:0007669"/>
    <property type="project" value="TreeGrafter"/>
</dbReference>
<dbReference type="GO" id="GO:0046872">
    <property type="term" value="F:metal ion binding"/>
    <property type="evidence" value="ECO:0007669"/>
    <property type="project" value="UniProtKB-UniRule"/>
</dbReference>
<dbReference type="GO" id="GO:0000166">
    <property type="term" value="F:nucleotide binding"/>
    <property type="evidence" value="ECO:0007669"/>
    <property type="project" value="UniProtKB-KW"/>
</dbReference>
<dbReference type="FunFam" id="3.40.1210.10:FF:000001">
    <property type="entry name" value="5'/3'-nucleotidase SurE"/>
    <property type="match status" value="1"/>
</dbReference>
<dbReference type="Gene3D" id="3.40.1210.10">
    <property type="entry name" value="Survival protein SurE-like phosphatase/nucleotidase"/>
    <property type="match status" value="1"/>
</dbReference>
<dbReference type="HAMAP" id="MF_00060">
    <property type="entry name" value="SurE"/>
    <property type="match status" value="1"/>
</dbReference>
<dbReference type="InterPro" id="IPR030048">
    <property type="entry name" value="SurE"/>
</dbReference>
<dbReference type="InterPro" id="IPR002828">
    <property type="entry name" value="SurE-like_Pase/nucleotidase"/>
</dbReference>
<dbReference type="InterPro" id="IPR036523">
    <property type="entry name" value="SurE-like_sf"/>
</dbReference>
<dbReference type="NCBIfam" id="NF001490">
    <property type="entry name" value="PRK00346.1-4"/>
    <property type="match status" value="1"/>
</dbReference>
<dbReference type="NCBIfam" id="TIGR00087">
    <property type="entry name" value="surE"/>
    <property type="match status" value="1"/>
</dbReference>
<dbReference type="PANTHER" id="PTHR30457">
    <property type="entry name" value="5'-NUCLEOTIDASE SURE"/>
    <property type="match status" value="1"/>
</dbReference>
<dbReference type="PANTHER" id="PTHR30457:SF12">
    <property type="entry name" value="5'_3'-NUCLEOTIDASE SURE"/>
    <property type="match status" value="1"/>
</dbReference>
<dbReference type="Pfam" id="PF01975">
    <property type="entry name" value="SurE"/>
    <property type="match status" value="1"/>
</dbReference>
<dbReference type="SUPFAM" id="SSF64167">
    <property type="entry name" value="SurE-like"/>
    <property type="match status" value="1"/>
</dbReference>
<comment type="function">
    <text evidence="1">Nucleotidase that shows phosphatase activity on nucleoside 5'-monophosphates.</text>
</comment>
<comment type="catalytic activity">
    <reaction evidence="1">
        <text>a ribonucleoside 5'-phosphate + H2O = a ribonucleoside + phosphate</text>
        <dbReference type="Rhea" id="RHEA:12484"/>
        <dbReference type="ChEBI" id="CHEBI:15377"/>
        <dbReference type="ChEBI" id="CHEBI:18254"/>
        <dbReference type="ChEBI" id="CHEBI:43474"/>
        <dbReference type="ChEBI" id="CHEBI:58043"/>
        <dbReference type="EC" id="3.1.3.5"/>
    </reaction>
</comment>
<comment type="cofactor">
    <cofactor evidence="1">
        <name>a divalent metal cation</name>
        <dbReference type="ChEBI" id="CHEBI:60240"/>
    </cofactor>
    <text evidence="1">Binds 1 divalent metal cation per subunit.</text>
</comment>
<comment type="subcellular location">
    <subcellularLocation>
        <location evidence="1">Cytoplasm</location>
    </subcellularLocation>
</comment>
<comment type="similarity">
    <text evidence="1">Belongs to the SurE nucleotidase family.</text>
</comment>
<proteinExistence type="inferred from homology"/>
<gene>
    <name evidence="1" type="primary">surE</name>
    <name type="ordered locus">ABAYE1047</name>
</gene>
<accession>B0VBZ1</accession>